<evidence type="ECO:0000255" key="1">
    <source>
        <dbReference type="HAMAP-Rule" id="MF_00222"/>
    </source>
</evidence>
<proteinExistence type="inferred from homology"/>
<name>AROE_HALOH</name>
<gene>
    <name evidence="1" type="primary">aroE</name>
    <name type="ordered locus">Hore_05960</name>
</gene>
<accession>B8D2C6</accession>
<sequence length="289" mass="31542">MFDNSTQVVGLMGYPLGHSMSPAMHNRAYKDLGINYVYLPLEIKPDFLKEGIEGLRAFNFRGVNVTIPYKEKVIPYLDEIDRLAGEIGAVNTIVNNGGKLKGYNTDALGFKKMLEDDCSFEIKGTKAVIIGAGGASRAVGAVLAREGASEIFLLNRTLKKAAKLVGIWNKTYPGIKTVALPLDEDKYLPVVKRCDVIIDTTPVGMAPGIKGGPVIAKEAITRDTLVVDLVYNPPETTLIKAGRQVGARTMNGFPMLIYQAAYAFKLWTGIKPELFIKPVREAISPDFFA</sequence>
<reference key="1">
    <citation type="journal article" date="2009" name="PLoS ONE">
        <title>Genome analysis of the anaerobic thermohalophilic bacterium Halothermothrix orenii.</title>
        <authorList>
            <person name="Mavromatis K."/>
            <person name="Ivanova N."/>
            <person name="Anderson I."/>
            <person name="Lykidis A."/>
            <person name="Hooper S.D."/>
            <person name="Sun H."/>
            <person name="Kunin V."/>
            <person name="Lapidus A."/>
            <person name="Hugenholtz P."/>
            <person name="Patel B."/>
            <person name="Kyrpides N.C."/>
        </authorList>
    </citation>
    <scope>NUCLEOTIDE SEQUENCE [LARGE SCALE GENOMIC DNA]</scope>
    <source>
        <strain>H 168 / OCM 544 / DSM 9562</strain>
    </source>
</reference>
<comment type="function">
    <text evidence="1">Involved in the biosynthesis of the chorismate, which leads to the biosynthesis of aromatic amino acids. Catalyzes the reversible NADPH linked reduction of 3-dehydroshikimate (DHSA) to yield shikimate (SA).</text>
</comment>
<comment type="catalytic activity">
    <reaction evidence="1">
        <text>shikimate + NADP(+) = 3-dehydroshikimate + NADPH + H(+)</text>
        <dbReference type="Rhea" id="RHEA:17737"/>
        <dbReference type="ChEBI" id="CHEBI:15378"/>
        <dbReference type="ChEBI" id="CHEBI:16630"/>
        <dbReference type="ChEBI" id="CHEBI:36208"/>
        <dbReference type="ChEBI" id="CHEBI:57783"/>
        <dbReference type="ChEBI" id="CHEBI:58349"/>
        <dbReference type="EC" id="1.1.1.25"/>
    </reaction>
</comment>
<comment type="pathway">
    <text evidence="1">Metabolic intermediate biosynthesis; chorismate biosynthesis; chorismate from D-erythrose 4-phosphate and phosphoenolpyruvate: step 4/7.</text>
</comment>
<comment type="subunit">
    <text evidence="1">Homodimer.</text>
</comment>
<comment type="similarity">
    <text evidence="1">Belongs to the shikimate dehydrogenase family.</text>
</comment>
<feature type="chain" id="PRO_1000124888" description="Shikimate dehydrogenase (NADP(+))">
    <location>
        <begin position="1"/>
        <end position="289"/>
    </location>
</feature>
<feature type="active site" description="Proton acceptor" evidence="1">
    <location>
        <position position="70"/>
    </location>
</feature>
<feature type="binding site" evidence="1">
    <location>
        <begin position="19"/>
        <end position="21"/>
    </location>
    <ligand>
        <name>shikimate</name>
        <dbReference type="ChEBI" id="CHEBI:36208"/>
    </ligand>
</feature>
<feature type="binding site" evidence="1">
    <location>
        <position position="66"/>
    </location>
    <ligand>
        <name>shikimate</name>
        <dbReference type="ChEBI" id="CHEBI:36208"/>
    </ligand>
</feature>
<feature type="binding site" evidence="1">
    <location>
        <position position="91"/>
    </location>
    <ligand>
        <name>shikimate</name>
        <dbReference type="ChEBI" id="CHEBI:36208"/>
    </ligand>
</feature>
<feature type="binding site" evidence="1">
    <location>
        <position position="106"/>
    </location>
    <ligand>
        <name>shikimate</name>
        <dbReference type="ChEBI" id="CHEBI:36208"/>
    </ligand>
</feature>
<feature type="binding site" evidence="1">
    <location>
        <begin position="131"/>
        <end position="135"/>
    </location>
    <ligand>
        <name>NADP(+)</name>
        <dbReference type="ChEBI" id="CHEBI:58349"/>
    </ligand>
</feature>
<feature type="binding site" evidence="1">
    <location>
        <begin position="155"/>
        <end position="160"/>
    </location>
    <ligand>
        <name>NADP(+)</name>
        <dbReference type="ChEBI" id="CHEBI:58349"/>
    </ligand>
</feature>
<feature type="binding site" evidence="1">
    <location>
        <position position="229"/>
    </location>
    <ligand>
        <name>NADP(+)</name>
        <dbReference type="ChEBI" id="CHEBI:58349"/>
    </ligand>
</feature>
<feature type="binding site" evidence="1">
    <location>
        <position position="231"/>
    </location>
    <ligand>
        <name>shikimate</name>
        <dbReference type="ChEBI" id="CHEBI:36208"/>
    </ligand>
</feature>
<feature type="binding site" evidence="1">
    <location>
        <position position="252"/>
    </location>
    <ligand>
        <name>NADP(+)</name>
        <dbReference type="ChEBI" id="CHEBI:58349"/>
    </ligand>
</feature>
<keyword id="KW-0028">Amino-acid biosynthesis</keyword>
<keyword id="KW-0057">Aromatic amino acid biosynthesis</keyword>
<keyword id="KW-0521">NADP</keyword>
<keyword id="KW-0560">Oxidoreductase</keyword>
<keyword id="KW-1185">Reference proteome</keyword>
<organism>
    <name type="scientific">Halothermothrix orenii (strain H 168 / OCM 544 / DSM 9562)</name>
    <dbReference type="NCBI Taxonomy" id="373903"/>
    <lineage>
        <taxon>Bacteria</taxon>
        <taxon>Bacillati</taxon>
        <taxon>Bacillota</taxon>
        <taxon>Clostridia</taxon>
        <taxon>Halanaerobiales</taxon>
        <taxon>Halothermotrichaceae</taxon>
        <taxon>Halothermothrix</taxon>
    </lineage>
</organism>
<protein>
    <recommendedName>
        <fullName evidence="1">Shikimate dehydrogenase (NADP(+))</fullName>
        <shortName evidence="1">SDH</shortName>
        <ecNumber evidence="1">1.1.1.25</ecNumber>
    </recommendedName>
</protein>
<dbReference type="EC" id="1.1.1.25" evidence="1"/>
<dbReference type="EMBL" id="CP001098">
    <property type="protein sequence ID" value="ACL69353.1"/>
    <property type="molecule type" value="Genomic_DNA"/>
</dbReference>
<dbReference type="RefSeq" id="WP_012635541.1">
    <property type="nucleotide sequence ID" value="NC_011899.1"/>
</dbReference>
<dbReference type="SMR" id="B8D2C6"/>
<dbReference type="STRING" id="373903.Hore_05960"/>
<dbReference type="KEGG" id="hor:Hore_05960"/>
<dbReference type="eggNOG" id="COG0169">
    <property type="taxonomic scope" value="Bacteria"/>
</dbReference>
<dbReference type="HOGENOM" id="CLU_044063_4_1_9"/>
<dbReference type="OrthoDB" id="9792692at2"/>
<dbReference type="UniPathway" id="UPA00053">
    <property type="reaction ID" value="UER00087"/>
</dbReference>
<dbReference type="Proteomes" id="UP000000719">
    <property type="component" value="Chromosome"/>
</dbReference>
<dbReference type="GO" id="GO:0050661">
    <property type="term" value="F:NADP binding"/>
    <property type="evidence" value="ECO:0007669"/>
    <property type="project" value="InterPro"/>
</dbReference>
<dbReference type="GO" id="GO:0004764">
    <property type="term" value="F:shikimate 3-dehydrogenase (NADP+) activity"/>
    <property type="evidence" value="ECO:0007669"/>
    <property type="project" value="UniProtKB-UniRule"/>
</dbReference>
<dbReference type="GO" id="GO:0008652">
    <property type="term" value="P:amino acid biosynthetic process"/>
    <property type="evidence" value="ECO:0007669"/>
    <property type="project" value="UniProtKB-KW"/>
</dbReference>
<dbReference type="GO" id="GO:0009073">
    <property type="term" value="P:aromatic amino acid family biosynthetic process"/>
    <property type="evidence" value="ECO:0007669"/>
    <property type="project" value="UniProtKB-KW"/>
</dbReference>
<dbReference type="GO" id="GO:0009423">
    <property type="term" value="P:chorismate biosynthetic process"/>
    <property type="evidence" value="ECO:0007669"/>
    <property type="project" value="UniProtKB-UniRule"/>
</dbReference>
<dbReference type="GO" id="GO:0019632">
    <property type="term" value="P:shikimate metabolic process"/>
    <property type="evidence" value="ECO:0007669"/>
    <property type="project" value="InterPro"/>
</dbReference>
<dbReference type="CDD" id="cd01065">
    <property type="entry name" value="NAD_bind_Shikimate_DH"/>
    <property type="match status" value="1"/>
</dbReference>
<dbReference type="FunFam" id="3.40.50.10860:FF:000004">
    <property type="entry name" value="Quinate/shikimate dehydrogenase"/>
    <property type="match status" value="1"/>
</dbReference>
<dbReference type="Gene3D" id="3.40.50.10860">
    <property type="entry name" value="Leucine Dehydrogenase, chain A, domain 1"/>
    <property type="match status" value="1"/>
</dbReference>
<dbReference type="Gene3D" id="3.40.50.720">
    <property type="entry name" value="NAD(P)-binding Rossmann-like Domain"/>
    <property type="match status" value="1"/>
</dbReference>
<dbReference type="HAMAP" id="MF_00222">
    <property type="entry name" value="Shikimate_DH_AroE"/>
    <property type="match status" value="1"/>
</dbReference>
<dbReference type="InterPro" id="IPR046346">
    <property type="entry name" value="Aminoacid_DH-like_N_sf"/>
</dbReference>
<dbReference type="InterPro" id="IPR036291">
    <property type="entry name" value="NAD(P)-bd_dom_sf"/>
</dbReference>
<dbReference type="InterPro" id="IPR041121">
    <property type="entry name" value="SDH_C"/>
</dbReference>
<dbReference type="InterPro" id="IPR011342">
    <property type="entry name" value="Shikimate_DH"/>
</dbReference>
<dbReference type="InterPro" id="IPR013708">
    <property type="entry name" value="Shikimate_DH-bd_N"/>
</dbReference>
<dbReference type="InterPro" id="IPR022893">
    <property type="entry name" value="Shikimate_DH_fam"/>
</dbReference>
<dbReference type="InterPro" id="IPR006151">
    <property type="entry name" value="Shikm_DH/Glu-tRNA_Rdtase"/>
</dbReference>
<dbReference type="NCBIfam" id="TIGR00507">
    <property type="entry name" value="aroE"/>
    <property type="match status" value="1"/>
</dbReference>
<dbReference type="NCBIfam" id="NF001319">
    <property type="entry name" value="PRK00258.3-3"/>
    <property type="match status" value="1"/>
</dbReference>
<dbReference type="PANTHER" id="PTHR21089:SF1">
    <property type="entry name" value="BIFUNCTIONAL 3-DEHYDROQUINATE DEHYDRATASE_SHIKIMATE DEHYDROGENASE, CHLOROPLASTIC"/>
    <property type="match status" value="1"/>
</dbReference>
<dbReference type="PANTHER" id="PTHR21089">
    <property type="entry name" value="SHIKIMATE DEHYDROGENASE"/>
    <property type="match status" value="1"/>
</dbReference>
<dbReference type="Pfam" id="PF18317">
    <property type="entry name" value="SDH_C"/>
    <property type="match status" value="1"/>
</dbReference>
<dbReference type="Pfam" id="PF01488">
    <property type="entry name" value="Shikimate_DH"/>
    <property type="match status" value="1"/>
</dbReference>
<dbReference type="Pfam" id="PF08501">
    <property type="entry name" value="Shikimate_dh_N"/>
    <property type="match status" value="1"/>
</dbReference>
<dbReference type="SUPFAM" id="SSF53223">
    <property type="entry name" value="Aminoacid dehydrogenase-like, N-terminal domain"/>
    <property type="match status" value="1"/>
</dbReference>
<dbReference type="SUPFAM" id="SSF51735">
    <property type="entry name" value="NAD(P)-binding Rossmann-fold domains"/>
    <property type="match status" value="1"/>
</dbReference>